<protein>
    <recommendedName>
        <fullName>Protein S100-A12</fullName>
    </recommendedName>
    <alternativeName>
        <fullName>CGRP</fullName>
    </alternativeName>
    <alternativeName>
        <fullName>Calcium-binding protein in amniotic fluid 1</fullName>
        <shortName>CAAF1</shortName>
    </alternativeName>
    <alternativeName>
        <fullName>Calgranulin-C</fullName>
        <shortName>CAGC</shortName>
    </alternativeName>
    <alternativeName>
        <fullName>Extracellular newly identified RAGE-binding protein</fullName>
        <shortName>EN-RAGE</shortName>
    </alternativeName>
    <alternativeName>
        <fullName>Migration inhibitory factor-related protein 6</fullName>
        <shortName>MRP-6</shortName>
        <shortName>p6</shortName>
    </alternativeName>
    <alternativeName>
        <fullName>Neutrophil S100 protein</fullName>
    </alternativeName>
    <alternativeName>
        <fullName>S100 calcium-binding protein A12</fullName>
    </alternativeName>
    <component>
        <recommendedName>
            <fullName>Calcitermin</fullName>
        </recommendedName>
    </component>
</protein>
<evidence type="ECO:0000255" key="1">
    <source>
        <dbReference type="PROSITE-ProRule" id="PRU00448"/>
    </source>
</evidence>
<evidence type="ECO:0000269" key="2">
    <source>
    </source>
</evidence>
<evidence type="ECO:0000269" key="3">
    <source>
    </source>
</evidence>
<evidence type="ECO:0000269" key="4">
    <source>
    </source>
</evidence>
<evidence type="ECO:0000269" key="5">
    <source>
    </source>
</evidence>
<evidence type="ECO:0000269" key="6">
    <source>
    </source>
</evidence>
<evidence type="ECO:0000269" key="7">
    <source>
    </source>
</evidence>
<evidence type="ECO:0000269" key="8">
    <source>
    </source>
</evidence>
<evidence type="ECO:0000269" key="9">
    <source>
    </source>
</evidence>
<evidence type="ECO:0000269" key="10">
    <source>
    </source>
</evidence>
<evidence type="ECO:0000269" key="11">
    <source>
    </source>
</evidence>
<evidence type="ECO:0000269" key="12">
    <source>
    </source>
</evidence>
<evidence type="ECO:0000269" key="13">
    <source>
    </source>
</evidence>
<evidence type="ECO:0000269" key="14">
    <source>
    </source>
</evidence>
<evidence type="ECO:0000305" key="15"/>
<evidence type="ECO:0007744" key="16">
    <source>
        <dbReference type="PDB" id="1E8A"/>
    </source>
</evidence>
<evidence type="ECO:0007744" key="17">
    <source>
        <dbReference type="PDB" id="1ODB"/>
    </source>
</evidence>
<evidence type="ECO:0007744" key="18">
    <source>
        <dbReference type="PDB" id="2WC8"/>
    </source>
</evidence>
<evidence type="ECO:0007744" key="19">
    <source>
        <dbReference type="PDB" id="2WCB"/>
    </source>
</evidence>
<evidence type="ECO:0007744" key="20">
    <source>
        <dbReference type="PDB" id="2WCE"/>
    </source>
</evidence>
<evidence type="ECO:0007744" key="21">
    <source>
        <dbReference type="PDB" id="2WCF"/>
    </source>
</evidence>
<evidence type="ECO:0007829" key="22">
    <source>
        <dbReference type="PDB" id="2WCB"/>
    </source>
</evidence>
<gene>
    <name type="primary">S100A12</name>
</gene>
<feature type="initiator methionine" description="Removed" evidence="8 12 13 14">
    <location>
        <position position="1"/>
    </location>
</feature>
<feature type="chain" id="PRO_0000045383" description="Protein S100-A12">
    <location>
        <begin position="2"/>
        <end position="92"/>
    </location>
</feature>
<feature type="peptide" id="PRO_0000004774" description="Calcitermin">
    <location>
        <begin position="78"/>
        <end position="92"/>
    </location>
</feature>
<feature type="domain" description="EF-hand 1" evidence="15">
    <location>
        <begin position="13"/>
        <end position="48"/>
    </location>
</feature>
<feature type="domain" description="EF-hand 2" evidence="1">
    <location>
        <begin position="49"/>
        <end position="84"/>
    </location>
</feature>
<feature type="region of interest" description="Hinge domain">
    <location>
        <begin position="38"/>
        <end position="53"/>
    </location>
</feature>
<feature type="binding site" evidence="5 17">
    <location>
        <position position="16"/>
    </location>
    <ligand>
        <name>Cu cation</name>
        <dbReference type="ChEBI" id="CHEBI:23378"/>
    </ligand>
</feature>
<feature type="binding site" evidence="10 18 19">
    <location>
        <position position="16"/>
    </location>
    <ligand>
        <name>Zn(2+)</name>
        <dbReference type="ChEBI" id="CHEBI:29105"/>
    </ligand>
</feature>
<feature type="binding site" evidence="2 5 16 17">
    <location>
        <position position="19"/>
    </location>
    <ligand>
        <name>Ca(2+)</name>
        <dbReference type="ChEBI" id="CHEBI:29108"/>
        <label>1</label>
        <note>low affinity</note>
    </ligand>
</feature>
<feature type="binding site" evidence="2 5 16 17">
    <location>
        <position position="22"/>
    </location>
    <ligand>
        <name>Ca(2+)</name>
        <dbReference type="ChEBI" id="CHEBI:29108"/>
        <label>1</label>
        <note>low affinity</note>
    </ligand>
</feature>
<feature type="binding site" evidence="2 5 16 17">
    <location>
        <position position="24"/>
    </location>
    <ligand>
        <name>Ca(2+)</name>
        <dbReference type="ChEBI" id="CHEBI:29108"/>
        <label>1</label>
        <note>low affinity</note>
    </ligand>
</feature>
<feature type="binding site" evidence="5 17">
    <location>
        <position position="26"/>
    </location>
    <ligand>
        <name>Cu cation</name>
        <dbReference type="ChEBI" id="CHEBI:23378"/>
    </ligand>
</feature>
<feature type="binding site" evidence="10 18 19">
    <location>
        <position position="26"/>
    </location>
    <ligand>
        <name>Zn(2+)</name>
        <dbReference type="ChEBI" id="CHEBI:29105"/>
    </ligand>
</feature>
<feature type="binding site" evidence="2 5 16 17">
    <location>
        <position position="27"/>
    </location>
    <ligand>
        <name>Ca(2+)</name>
        <dbReference type="ChEBI" id="CHEBI:29108"/>
        <label>1</label>
        <note>low affinity</note>
    </ligand>
</feature>
<feature type="binding site" evidence="2 5 16 17">
    <location>
        <position position="32"/>
    </location>
    <ligand>
        <name>Ca(2+)</name>
        <dbReference type="ChEBI" id="CHEBI:29108"/>
        <label>1</label>
        <note>low affinity</note>
    </ligand>
</feature>
<feature type="binding site" evidence="2 5 16 17">
    <location>
        <position position="62"/>
    </location>
    <ligand>
        <name>Ca(2+)</name>
        <dbReference type="ChEBI" id="CHEBI:29108"/>
        <label>2</label>
        <note>high affinity</note>
    </ligand>
</feature>
<feature type="binding site" evidence="2 5 16 17">
    <location>
        <position position="64"/>
    </location>
    <ligand>
        <name>Ca(2+)</name>
        <dbReference type="ChEBI" id="CHEBI:29108"/>
        <label>2</label>
        <note>high affinity</note>
    </ligand>
</feature>
<feature type="binding site" evidence="2 5 16 17">
    <location>
        <position position="66"/>
    </location>
    <ligand>
        <name>Ca(2+)</name>
        <dbReference type="ChEBI" id="CHEBI:29108"/>
        <label>2</label>
        <note>high affinity</note>
    </ligand>
</feature>
<feature type="binding site" evidence="2 5 16 17">
    <location>
        <position position="68"/>
    </location>
    <ligand>
        <name>Ca(2+)</name>
        <dbReference type="ChEBI" id="CHEBI:29108"/>
        <label>2</label>
        <note>high affinity</note>
    </ligand>
</feature>
<feature type="binding site" evidence="2 5 16 17">
    <location>
        <position position="73"/>
    </location>
    <ligand>
        <name>Ca(2+)</name>
        <dbReference type="ChEBI" id="CHEBI:29108"/>
        <label>2</label>
        <note>high affinity</note>
    </ligand>
</feature>
<feature type="binding site" evidence="5 17">
    <location>
        <position position="86"/>
    </location>
    <ligand>
        <name>Cu cation</name>
        <dbReference type="ChEBI" id="CHEBI:23378"/>
    </ligand>
</feature>
<feature type="binding site" evidence="10 18 19">
    <location>
        <position position="86"/>
    </location>
    <ligand>
        <name>Zn(2+)</name>
        <dbReference type="ChEBI" id="CHEBI:29105"/>
    </ligand>
</feature>
<feature type="binding site" evidence="5 17">
    <location>
        <position position="90"/>
    </location>
    <ligand>
        <name>Cu cation</name>
        <dbReference type="ChEBI" id="CHEBI:23378"/>
    </ligand>
</feature>
<feature type="binding site" evidence="10 18 19">
    <location>
        <position position="90"/>
    </location>
    <ligand>
        <name>Zn(2+)</name>
        <dbReference type="ChEBI" id="CHEBI:29105"/>
    </ligand>
</feature>
<feature type="sequence conflict" description="In Ref. 8; AA sequence." evidence="15" ref="8">
    <original>H</original>
    <variation>V</variation>
    <location>
        <position position="7"/>
    </location>
</feature>
<feature type="sequence conflict" description="In Ref. 8; AA sequence." evidence="15" ref="8">
    <original>VN</original>
    <variation>YS</variation>
    <location>
        <begin position="12"/>
        <end position="13"/>
    </location>
</feature>
<feature type="sequence conflict" description="In Ref. 8; AA sequence." evidence="15" ref="8">
    <original>H</original>
    <variation>F</variation>
    <location>
        <position position="16"/>
    </location>
</feature>
<feature type="helix" evidence="22">
    <location>
        <begin position="3"/>
        <end position="19"/>
    </location>
</feature>
<feature type="strand" evidence="22">
    <location>
        <begin position="21"/>
        <end position="24"/>
    </location>
</feature>
<feature type="strand" evidence="22">
    <location>
        <begin position="27"/>
        <end position="29"/>
    </location>
</feature>
<feature type="helix" evidence="22">
    <location>
        <begin position="30"/>
        <end position="40"/>
    </location>
</feature>
<feature type="helix" evidence="22">
    <location>
        <begin position="42"/>
        <end position="47"/>
    </location>
</feature>
<feature type="helix" evidence="22">
    <location>
        <begin position="51"/>
        <end position="58"/>
    </location>
</feature>
<feature type="strand" evidence="22">
    <location>
        <begin position="61"/>
        <end position="64"/>
    </location>
</feature>
<feature type="strand" evidence="22">
    <location>
        <begin position="67"/>
        <end position="70"/>
    </location>
</feature>
<feature type="helix" evidence="22">
    <location>
        <begin position="71"/>
        <end position="89"/>
    </location>
</feature>
<name>S10AC_HUMAN</name>
<sequence>MTKLEEHLEGIVNIFHQYSVRKGHFDTLSKGELKQLLTKELANTIKNIKDKAVIDEIFQGLDANQDEQVDFQEFISLVAIALKAAHYHTHKE</sequence>
<organism>
    <name type="scientific">Homo sapiens</name>
    <name type="common">Human</name>
    <dbReference type="NCBI Taxonomy" id="9606"/>
    <lineage>
        <taxon>Eukaryota</taxon>
        <taxon>Metazoa</taxon>
        <taxon>Chordata</taxon>
        <taxon>Craniata</taxon>
        <taxon>Vertebrata</taxon>
        <taxon>Euteleostomi</taxon>
        <taxon>Mammalia</taxon>
        <taxon>Eutheria</taxon>
        <taxon>Euarchontoglires</taxon>
        <taxon>Primates</taxon>
        <taxon>Haplorrhini</taxon>
        <taxon>Catarrhini</taxon>
        <taxon>Hominidae</taxon>
        <taxon>Homo</taxon>
    </lineage>
</organism>
<accession>P80511</accession>
<accession>P83219</accession>
<accession>Q5SY66</accession>
<accession>Q7M4R1</accession>
<reference key="1">
    <citation type="journal article" date="1996" name="Biochem. Biophys. Res. Commun.">
        <title>Human CAAF1 gene -- molecular cloning, gene structure, and chromosome mapping.</title>
        <authorList>
            <person name="Yamamura T."/>
            <person name="Hitomi J."/>
            <person name="Nagasaki K."/>
            <person name="Suzuki M."/>
            <person name="Takahashi E."/>
            <person name="Saito S."/>
            <person name="Tsukada T."/>
            <person name="Yamaguchi K."/>
        </authorList>
    </citation>
    <scope>NUCLEOTIDE SEQUENCE [GENOMIC DNA / MRNA]</scope>
</reference>
<reference key="2">
    <citation type="journal article" date="1996" name="Cell Calcium">
        <title>Characterization of the human S100A12 (calgranulin C, p6, CAAF1, CGRP) gene, a new member of the S100 gene cluster on chromosome 1q21.</title>
        <authorList>
            <person name="Wicki R."/>
            <person name="Marenholz I."/>
            <person name="Mischke D."/>
            <person name="Schaefer B.W."/>
            <person name="Heizmann C.W."/>
        </authorList>
    </citation>
    <scope>NUCLEOTIDE SEQUENCE [GENOMIC DNA / MRNA]</scope>
</reference>
<reference key="3">
    <citation type="journal article" date="2006" name="Nature">
        <title>The DNA sequence and biological annotation of human chromosome 1.</title>
        <authorList>
            <person name="Gregory S.G."/>
            <person name="Barlow K.F."/>
            <person name="McLay K.E."/>
            <person name="Kaul R."/>
            <person name="Swarbreck D."/>
            <person name="Dunham A."/>
            <person name="Scott C.E."/>
            <person name="Howe K.L."/>
            <person name="Woodfine K."/>
            <person name="Spencer C.C.A."/>
            <person name="Jones M.C."/>
            <person name="Gillson C."/>
            <person name="Searle S."/>
            <person name="Zhou Y."/>
            <person name="Kokocinski F."/>
            <person name="McDonald L."/>
            <person name="Evans R."/>
            <person name="Phillips K."/>
            <person name="Atkinson A."/>
            <person name="Cooper R."/>
            <person name="Jones C."/>
            <person name="Hall R.E."/>
            <person name="Andrews T.D."/>
            <person name="Lloyd C."/>
            <person name="Ainscough R."/>
            <person name="Almeida J.P."/>
            <person name="Ambrose K.D."/>
            <person name="Anderson F."/>
            <person name="Andrew R.W."/>
            <person name="Ashwell R.I.S."/>
            <person name="Aubin K."/>
            <person name="Babbage A.K."/>
            <person name="Bagguley C.L."/>
            <person name="Bailey J."/>
            <person name="Beasley H."/>
            <person name="Bethel G."/>
            <person name="Bird C.P."/>
            <person name="Bray-Allen S."/>
            <person name="Brown J.Y."/>
            <person name="Brown A.J."/>
            <person name="Buckley D."/>
            <person name="Burton J."/>
            <person name="Bye J."/>
            <person name="Carder C."/>
            <person name="Chapman J.C."/>
            <person name="Clark S.Y."/>
            <person name="Clarke G."/>
            <person name="Clee C."/>
            <person name="Cobley V."/>
            <person name="Collier R.E."/>
            <person name="Corby N."/>
            <person name="Coville G.J."/>
            <person name="Davies J."/>
            <person name="Deadman R."/>
            <person name="Dunn M."/>
            <person name="Earthrowl M."/>
            <person name="Ellington A.G."/>
            <person name="Errington H."/>
            <person name="Frankish A."/>
            <person name="Frankland J."/>
            <person name="French L."/>
            <person name="Garner P."/>
            <person name="Garnett J."/>
            <person name="Gay L."/>
            <person name="Ghori M.R.J."/>
            <person name="Gibson R."/>
            <person name="Gilby L.M."/>
            <person name="Gillett W."/>
            <person name="Glithero R.J."/>
            <person name="Grafham D.V."/>
            <person name="Griffiths C."/>
            <person name="Griffiths-Jones S."/>
            <person name="Grocock R."/>
            <person name="Hammond S."/>
            <person name="Harrison E.S.I."/>
            <person name="Hart E."/>
            <person name="Haugen E."/>
            <person name="Heath P.D."/>
            <person name="Holmes S."/>
            <person name="Holt K."/>
            <person name="Howden P.J."/>
            <person name="Hunt A.R."/>
            <person name="Hunt S.E."/>
            <person name="Hunter G."/>
            <person name="Isherwood J."/>
            <person name="James R."/>
            <person name="Johnson C."/>
            <person name="Johnson D."/>
            <person name="Joy A."/>
            <person name="Kay M."/>
            <person name="Kershaw J.K."/>
            <person name="Kibukawa M."/>
            <person name="Kimberley A.M."/>
            <person name="King A."/>
            <person name="Knights A.J."/>
            <person name="Lad H."/>
            <person name="Laird G."/>
            <person name="Lawlor S."/>
            <person name="Leongamornlert D.A."/>
            <person name="Lloyd D.M."/>
            <person name="Loveland J."/>
            <person name="Lovell J."/>
            <person name="Lush M.J."/>
            <person name="Lyne R."/>
            <person name="Martin S."/>
            <person name="Mashreghi-Mohammadi M."/>
            <person name="Matthews L."/>
            <person name="Matthews N.S.W."/>
            <person name="McLaren S."/>
            <person name="Milne S."/>
            <person name="Mistry S."/>
            <person name="Moore M.J.F."/>
            <person name="Nickerson T."/>
            <person name="O'Dell C.N."/>
            <person name="Oliver K."/>
            <person name="Palmeiri A."/>
            <person name="Palmer S.A."/>
            <person name="Parker A."/>
            <person name="Patel D."/>
            <person name="Pearce A.V."/>
            <person name="Peck A.I."/>
            <person name="Pelan S."/>
            <person name="Phelps K."/>
            <person name="Phillimore B.J."/>
            <person name="Plumb R."/>
            <person name="Rajan J."/>
            <person name="Raymond C."/>
            <person name="Rouse G."/>
            <person name="Saenphimmachak C."/>
            <person name="Sehra H.K."/>
            <person name="Sheridan E."/>
            <person name="Shownkeen R."/>
            <person name="Sims S."/>
            <person name="Skuce C.D."/>
            <person name="Smith M."/>
            <person name="Steward C."/>
            <person name="Subramanian S."/>
            <person name="Sycamore N."/>
            <person name="Tracey A."/>
            <person name="Tromans A."/>
            <person name="Van Helmond Z."/>
            <person name="Wall M."/>
            <person name="Wallis J.M."/>
            <person name="White S."/>
            <person name="Whitehead S.L."/>
            <person name="Wilkinson J.E."/>
            <person name="Willey D.L."/>
            <person name="Williams H."/>
            <person name="Wilming L."/>
            <person name="Wray P.W."/>
            <person name="Wu Z."/>
            <person name="Coulson A."/>
            <person name="Vaudin M."/>
            <person name="Sulston J.E."/>
            <person name="Durbin R.M."/>
            <person name="Hubbard T."/>
            <person name="Wooster R."/>
            <person name="Dunham I."/>
            <person name="Carter N.P."/>
            <person name="McVean G."/>
            <person name="Ross M.T."/>
            <person name="Harrow J."/>
            <person name="Olson M.V."/>
            <person name="Beck S."/>
            <person name="Rogers J."/>
            <person name="Bentley D.R."/>
        </authorList>
    </citation>
    <scope>NUCLEOTIDE SEQUENCE [LARGE SCALE GENOMIC DNA]</scope>
</reference>
<reference key="4">
    <citation type="journal article" date="2004" name="Genome Res.">
        <title>The status, quality, and expansion of the NIH full-length cDNA project: the Mammalian Gene Collection (MGC).</title>
        <authorList>
            <consortium name="The MGC Project Team"/>
        </authorList>
    </citation>
    <scope>NUCLEOTIDE SEQUENCE [LARGE SCALE MRNA]</scope>
    <source>
        <tissue>Blood</tissue>
    </source>
</reference>
<reference key="5">
    <citation type="journal article" date="1996" name="Biochem. Biophys. Res. Commun.">
        <title>Host-parasite interaction in human onchocerciasis: identification and sequence analysis of a novel human calgranulin.</title>
        <authorList>
            <person name="Marti T."/>
            <person name="Erttmann K.D."/>
            <person name="Gallin M.Y."/>
        </authorList>
    </citation>
    <scope>PROTEIN SEQUENCE OF 2-92</scope>
</reference>
<reference key="6">
    <citation type="journal article" date="1996" name="Biochem. Biophys. Res. Commun.">
        <title>Amino acid sequence determination of human S100A12 (P6, calgranulin C, CGRP, CAAF1) by tandem mass spectrometry.</title>
        <authorList>
            <person name="Ilg E.C."/>
            <person name="Troxler H."/>
            <person name="Buergisser D.M."/>
            <person name="Kuster T."/>
            <person name="Markert M."/>
            <person name="Guignard F."/>
            <person name="Hunziker P."/>
            <person name="Birchler N."/>
            <person name="Heizmann C.W."/>
        </authorList>
    </citation>
    <scope>PROTEIN SEQUENCE OF 2-92</scope>
    <source>
        <tissue>Neutrophil</tissue>
    </source>
</reference>
<reference key="7">
    <citation type="journal article" date="1995" name="Biochem. J.">
        <title>Identification and characterization of a novel human neutrophil protein related to the S100 family.</title>
        <authorList>
            <person name="Guignard F."/>
            <person name="Mauel J."/>
            <person name="Markert M."/>
        </authorList>
    </citation>
    <scope>PROTEIN SEQUENCE OF 2-21</scope>
</reference>
<reference key="8">
    <citation type="journal article" date="1991" name="Exp. Lung Res.">
        <title>Identification, isolation, and partial characterization of a 7.5-kDa surfactant-associated protein.</title>
        <authorList>
            <person name="Singh G."/>
            <person name="Katyal S.L."/>
            <person name="Brown W.E."/>
            <person name="Kennedy A.L."/>
            <person name="Wong-Chong M.-L."/>
            <person name="Gottron S.A."/>
        </authorList>
    </citation>
    <scope>PROTEIN SEQUENCE OF 2-16</scope>
</reference>
<reference key="9">
    <citation type="journal article" date="2001" name="FEBS Lett.">
        <title>Calcitermin, a novel antimicrobial peptide isolated from human airway secretions.</title>
        <authorList>
            <person name="Cole A.M."/>
            <person name="Kim Y.-H."/>
            <person name="Tahk S."/>
            <person name="Hong T."/>
            <person name="Weis P."/>
            <person name="Waring A.J."/>
            <person name="Ganz T."/>
        </authorList>
    </citation>
    <scope>PROTEIN SEQUENCE OF 78-92</scope>
    <scope>FUNCTION AS AN ANTIMICROBIAL PROTEIN</scope>
    <scope>MASS SPECTROMETRY</scope>
    <source>
        <tissue>Nasal mucus</tissue>
    </source>
</reference>
<reference key="10">
    <citation type="journal article" date="2002" name="J. Biol. Chem.">
        <title>CacyBP/SIP, a calcyclin and Siah-1-interacting protein, binds EF-hand proteins of the S100 family.</title>
        <authorList>
            <person name="Filipek A."/>
            <person name="Jastrzebska B."/>
            <person name="Nowotny M."/>
            <person name="Kuznicki J."/>
        </authorList>
    </citation>
    <scope>INTERACTION WITH CACYBP</scope>
</reference>
<reference key="11">
    <citation type="journal article" date="2003" name="Microsc. Res. Tech.">
        <title>Multiple structural states of S100A12: A key to its functional diversity.</title>
        <authorList>
            <person name="Moroz O.V."/>
            <person name="Dodson G.G."/>
            <person name="Wilson K.S."/>
            <person name="Lukanidin E."/>
            <person name="Bronstein I.B."/>
        </authorList>
    </citation>
    <scope>REVIEW</scope>
</reference>
<reference key="12">
    <citation type="journal article" date="2007" name="J. Allergy Clin. Immunol.">
        <title>S100A12 provokes mast cell activation: a potential amplification pathway in asthma and innate immunity.</title>
        <authorList>
            <person name="Yang Z."/>
            <person name="Yan W.X."/>
            <person name="Cai H."/>
            <person name="Tedla N."/>
            <person name="Armishaw C."/>
            <person name="Di Girolamo N."/>
            <person name="Wang H.W."/>
            <person name="Hampartzoumian T."/>
            <person name="Simpson J.L."/>
            <person name="Gibson P.G."/>
            <person name="Hunt J."/>
            <person name="Hart P."/>
            <person name="Hughes J.M."/>
            <person name="Perry M.A."/>
            <person name="Alewood P.F."/>
            <person name="Geczy C.L."/>
        </authorList>
    </citation>
    <scope>FUNCTION</scope>
</reference>
<reference key="13">
    <citation type="journal article" date="2008" name="J. Biol. Chem.">
        <title>Mast cell and monocyte recruitment by S100A12 and its hinge domain.</title>
        <authorList>
            <person name="Yan W.X."/>
            <person name="Armishaw C."/>
            <person name="Goyette J."/>
            <person name="Yang Z."/>
            <person name="Cai H."/>
            <person name="Alewood P."/>
            <person name="Geczy C.L."/>
        </authorList>
    </citation>
    <scope>FUNCTION</scope>
    <scope>DOMAIN HINGE</scope>
</reference>
<reference key="14">
    <citation type="journal article" date="2009" name="Amino Acids">
        <title>Human S100A12: a novel key player in inflammation?</title>
        <authorList>
            <person name="Pietzsch J."/>
            <person name="Hoppmann S."/>
        </authorList>
    </citation>
    <scope>REVIEW</scope>
</reference>
<reference key="15">
    <citation type="journal article" date="2009" name="Antiinflamm. Antiallergy Agents Med. Chem.">
        <title>Anti-infective protective properties of S100 calgranulins.</title>
        <authorList>
            <person name="Hsu K."/>
            <person name="Champaiboon C."/>
            <person name="Guenther B.D."/>
            <person name="Sorenson B.S."/>
            <person name="Khammanivong A."/>
            <person name="Ross K.F."/>
            <person name="Geczy C.L."/>
            <person name="Herzberg M.C."/>
        </authorList>
    </citation>
    <scope>REVIEW</scope>
</reference>
<reference key="16">
    <citation type="journal article" date="2009" name="BMC Biochem.">
        <title>Both Ca2+ and Zn2+ are essential for S100A12 protein oligomerization and function.</title>
        <authorList>
            <person name="Moroz O.V."/>
            <person name="Burkitt W."/>
            <person name="Wittkowski H."/>
            <person name="He W."/>
            <person name="Ianoul A."/>
            <person name="Novitskaya V."/>
            <person name="Xie J."/>
            <person name="Polyakova O."/>
            <person name="Lednev I.K."/>
            <person name="Shekhtman A."/>
            <person name="Derrick P.J."/>
            <person name="Bjoerk P."/>
            <person name="Foell D."/>
            <person name="Bronstein I.B."/>
        </authorList>
    </citation>
    <scope>FUNCTION</scope>
    <scope>SUBUNIT</scope>
    <scope>INTERACTION WITH AGER</scope>
</reference>
<reference key="17">
    <citation type="journal article" date="2010" name="Immunol. Cell Biol.">
        <title>S100 Calgranulins in inflammatory arthritis.</title>
        <authorList>
            <person name="Perera C."/>
            <person name="McNeil H.P."/>
            <person name="Geczy C.L."/>
        </authorList>
    </citation>
    <scope>REVIEW</scope>
</reference>
<reference key="18">
    <citation type="journal article" date="2011" name="Amino Acids">
        <title>Inflammation-associated S100 proteins: new mechanisms that regulate function.</title>
        <authorList>
            <person name="Goyette J."/>
            <person name="Geczy C.L."/>
        </authorList>
    </citation>
    <scope>REVIEW</scope>
</reference>
<reference key="19">
    <citation type="journal article" date="2012" name="Int. J. Inflamm.">
        <title>The role of S100A12 as a systemic marker of inflammation.</title>
        <authorList>
            <person name="Meijer B."/>
            <person name="Gearry R.B."/>
            <person name="Day A.S."/>
        </authorList>
    </citation>
    <scope>REVIEW</scope>
    <scope>SUBCELLULAR LOCATION</scope>
</reference>
<reference key="20">
    <citation type="journal article" date="2014" name="J. Proteomics">
        <title>An enzyme assisted RP-RPLC approach for in-depth analysis of human liver phosphoproteome.</title>
        <authorList>
            <person name="Bian Y."/>
            <person name="Song C."/>
            <person name="Cheng K."/>
            <person name="Dong M."/>
            <person name="Wang F."/>
            <person name="Huang J."/>
            <person name="Sun D."/>
            <person name="Wang L."/>
            <person name="Ye M."/>
            <person name="Zou H."/>
        </authorList>
    </citation>
    <scope>IDENTIFICATION BY MASS SPECTROMETRY [LARGE SCALE ANALYSIS]</scope>
    <source>
        <tissue>Liver</tissue>
    </source>
</reference>
<reference evidence="16" key="21">
    <citation type="journal article" date="2001" name="Acta Crystallogr. D">
        <title>The three-dimensional structure of human S100A12.</title>
        <authorList>
            <person name="Moroz O.V."/>
            <person name="Antson A.A."/>
            <person name="Murshudov G.N."/>
            <person name="Maitland N.J."/>
            <person name="Dodson G.G."/>
            <person name="Wilson K.S."/>
            <person name="Skibshoj I."/>
            <person name="Lukanidin E.M."/>
            <person name="Bronstein I.B."/>
        </authorList>
    </citation>
    <scope>X-RAY CRYSTALLOGRAPHY (1.95 ANGSTROMS) IN COMPLEX WITH CALCIUM</scope>
</reference>
<reference evidence="17" key="22">
    <citation type="journal article" date="2003" name="Acta Crystallogr. D">
        <title>Structure of the human S100A12-copper complex: implications for host-parasite defence.</title>
        <authorList>
            <person name="Moroz O.V."/>
            <person name="Antson A.A."/>
            <person name="Grist S.J."/>
            <person name="Maitland N.J."/>
            <person name="Dodson G.G."/>
            <person name="Wilson K.S."/>
            <person name="Lukanidin E."/>
            <person name="Bronstein I.B."/>
        </authorList>
    </citation>
    <scope>X-RAY CRYSTALLOGRAPHY (2.19 ANGSTROMS) IN COMPLEX WITH CALCIUM AND COPPER</scope>
</reference>
<reference evidence="18 19 20 21" key="23">
    <citation type="journal article" date="2009" name="J. Mol. Biol.">
        <title>The crystal structures of human S100A12 in apo form and in complex with zinc: new insights into S100A12 oligomerisation.</title>
        <authorList>
            <person name="Moroz O.V."/>
            <person name="Blagova E.V."/>
            <person name="Wilkinson A.J."/>
            <person name="Wilson K.S."/>
            <person name="Bronstein I.B."/>
        </authorList>
    </citation>
    <scope>X-RAY CRYSTALLOGRAPHY (1.88 ANGSTROMS) OF 2-92 IN COMPLEX WITH ZINC</scope>
</reference>
<dbReference type="EMBL" id="D49549">
    <property type="protein sequence ID" value="BAA08497.1"/>
    <property type="molecule type" value="mRNA"/>
</dbReference>
<dbReference type="EMBL" id="D83657">
    <property type="protein sequence ID" value="BAA12030.1"/>
    <property type="molecule type" value="Genomic_DNA"/>
</dbReference>
<dbReference type="EMBL" id="D83664">
    <property type="protein sequence ID" value="BAA12036.1"/>
    <property type="molecule type" value="mRNA"/>
</dbReference>
<dbReference type="EMBL" id="X97859">
    <property type="protein sequence ID" value="CAA66453.1"/>
    <property type="molecule type" value="mRNA"/>
</dbReference>
<dbReference type="EMBL" id="X98289">
    <property type="protein sequence ID" value="CAB94792.1"/>
    <property type="molecule type" value="Genomic_DNA"/>
</dbReference>
<dbReference type="EMBL" id="X98290">
    <property type="protein sequence ID" value="CAB94792.1"/>
    <property type="status" value="JOINED"/>
    <property type="molecule type" value="Genomic_DNA"/>
</dbReference>
<dbReference type="EMBL" id="AL591704">
    <property type="status" value="NOT_ANNOTATED_CDS"/>
    <property type="molecule type" value="Genomic_DNA"/>
</dbReference>
<dbReference type="EMBL" id="BC070294">
    <property type="protein sequence ID" value="AAH70294.1"/>
    <property type="molecule type" value="mRNA"/>
</dbReference>
<dbReference type="CCDS" id="CCDS1037.1"/>
<dbReference type="PIR" id="A61522">
    <property type="entry name" value="A61522"/>
</dbReference>
<dbReference type="PIR" id="JC4712">
    <property type="entry name" value="JC4712"/>
</dbReference>
<dbReference type="RefSeq" id="NP_005612.1">
    <property type="nucleotide sequence ID" value="NM_005621.2"/>
</dbReference>
<dbReference type="PDB" id="1E8A">
    <property type="method" value="X-ray"/>
    <property type="resolution" value="1.95 A"/>
    <property type="chains" value="A/B=2-92"/>
</dbReference>
<dbReference type="PDB" id="1GQM">
    <property type="method" value="X-ray"/>
    <property type="resolution" value="2.70 A"/>
    <property type="chains" value="A/B/C/D/E/F/G/H/I/J/K/L=2-92"/>
</dbReference>
<dbReference type="PDB" id="1ODB">
    <property type="method" value="X-ray"/>
    <property type="resolution" value="2.19 A"/>
    <property type="chains" value="A/B/C/D/E/F=2-92"/>
</dbReference>
<dbReference type="PDB" id="2M9G">
    <property type="method" value="NMR"/>
    <property type="chains" value="A/B=1-92"/>
</dbReference>
<dbReference type="PDB" id="2WC8">
    <property type="method" value="X-ray"/>
    <property type="resolution" value="1.88 A"/>
    <property type="chains" value="A/B/C/D=2-92"/>
</dbReference>
<dbReference type="PDB" id="2WCB">
    <property type="method" value="X-ray"/>
    <property type="resolution" value="1.73 A"/>
    <property type="chains" value="A/B=2-92"/>
</dbReference>
<dbReference type="PDB" id="2WCE">
    <property type="method" value="X-ray"/>
    <property type="resolution" value="1.77 A"/>
    <property type="chains" value="A/B=2-92"/>
</dbReference>
<dbReference type="PDB" id="2WCF">
    <property type="method" value="X-ray"/>
    <property type="resolution" value="2.78 A"/>
    <property type="chains" value="A/B/C/D/E/F=2-92"/>
</dbReference>
<dbReference type="PDBsum" id="1E8A"/>
<dbReference type="PDBsum" id="1GQM"/>
<dbReference type="PDBsum" id="1ODB"/>
<dbReference type="PDBsum" id="2M9G"/>
<dbReference type="PDBsum" id="2WC8"/>
<dbReference type="PDBsum" id="2WCB"/>
<dbReference type="PDBsum" id="2WCE"/>
<dbReference type="PDBsum" id="2WCF"/>
<dbReference type="BMRB" id="P80511"/>
<dbReference type="SMR" id="P80511"/>
<dbReference type="BioGRID" id="112191">
    <property type="interactions" value="4"/>
</dbReference>
<dbReference type="FunCoup" id="P80511">
    <property type="interactions" value="32"/>
</dbReference>
<dbReference type="IntAct" id="P80511">
    <property type="interactions" value="5"/>
</dbReference>
<dbReference type="STRING" id="9606.ENSP00000357726"/>
<dbReference type="DrugBank" id="DB01025">
    <property type="generic name" value="Amlexanox"/>
</dbReference>
<dbReference type="DrugBank" id="DB00768">
    <property type="generic name" value="Olopatadine"/>
</dbReference>
<dbReference type="iPTMnet" id="P80511"/>
<dbReference type="PhosphoSitePlus" id="P80511"/>
<dbReference type="BioMuta" id="S100A12"/>
<dbReference type="DMDM" id="2507565"/>
<dbReference type="CPTAC" id="non-CPTAC-1154"/>
<dbReference type="jPOST" id="P80511"/>
<dbReference type="MassIVE" id="P80511"/>
<dbReference type="PaxDb" id="9606-ENSP00000357726"/>
<dbReference type="PeptideAtlas" id="P80511"/>
<dbReference type="ProteomicsDB" id="57687"/>
<dbReference type="Pumba" id="P80511"/>
<dbReference type="TopDownProteomics" id="P80511"/>
<dbReference type="Antibodypedia" id="1076">
    <property type="antibodies" value="364 antibodies from 31 providers"/>
</dbReference>
<dbReference type="CPTC" id="P80511">
    <property type="antibodies" value="1 antibody"/>
</dbReference>
<dbReference type="DNASU" id="6283"/>
<dbReference type="Ensembl" id="ENST00000368737.5">
    <property type="protein sequence ID" value="ENSP00000357726.3"/>
    <property type="gene ID" value="ENSG00000163221.9"/>
</dbReference>
<dbReference type="GeneID" id="6283"/>
<dbReference type="KEGG" id="hsa:6283"/>
<dbReference type="MANE-Select" id="ENST00000368737.5">
    <property type="protein sequence ID" value="ENSP00000357726.3"/>
    <property type="RefSeq nucleotide sequence ID" value="NM_005621.2"/>
    <property type="RefSeq protein sequence ID" value="NP_005612.1"/>
</dbReference>
<dbReference type="UCSC" id="uc001fbr.2">
    <property type="organism name" value="human"/>
</dbReference>
<dbReference type="AGR" id="HGNC:10489"/>
<dbReference type="CTD" id="6283"/>
<dbReference type="DisGeNET" id="6283"/>
<dbReference type="GeneCards" id="S100A12"/>
<dbReference type="HGNC" id="HGNC:10489">
    <property type="gene designation" value="S100A12"/>
</dbReference>
<dbReference type="HPA" id="ENSG00000163221">
    <property type="expression patterns" value="Tissue enriched (bone)"/>
</dbReference>
<dbReference type="MIM" id="603112">
    <property type="type" value="gene"/>
</dbReference>
<dbReference type="neXtProt" id="NX_P80511"/>
<dbReference type="OpenTargets" id="ENSG00000163221"/>
<dbReference type="PharmGKB" id="PA34901"/>
<dbReference type="VEuPathDB" id="HostDB:ENSG00000163221"/>
<dbReference type="eggNOG" id="ENOG502SA01">
    <property type="taxonomic scope" value="Eukaryota"/>
</dbReference>
<dbReference type="GeneTree" id="ENSGT00940000162189"/>
<dbReference type="HOGENOM" id="CLU_138624_6_2_1"/>
<dbReference type="InParanoid" id="P80511"/>
<dbReference type="OMA" id="HEHLHEV"/>
<dbReference type="OrthoDB" id="9909924at2759"/>
<dbReference type="PAN-GO" id="P80511">
    <property type="GO annotations" value="7 GO annotations based on evolutionary models"/>
</dbReference>
<dbReference type="PhylomeDB" id="P80511"/>
<dbReference type="TreeFam" id="TF332727"/>
<dbReference type="PathwayCommons" id="P80511"/>
<dbReference type="Reactome" id="R-HSA-445989">
    <property type="pathway name" value="TAK1-dependent IKK and NF-kappa-B activation"/>
</dbReference>
<dbReference type="Reactome" id="R-HSA-6798695">
    <property type="pathway name" value="Neutrophil degranulation"/>
</dbReference>
<dbReference type="Reactome" id="R-HSA-879415">
    <property type="pathway name" value="Advanced glycosylation endproduct receptor signaling"/>
</dbReference>
<dbReference type="Reactome" id="R-HSA-933542">
    <property type="pathway name" value="TRAF6 mediated NF-kB activation"/>
</dbReference>
<dbReference type="SignaLink" id="P80511"/>
<dbReference type="BioGRID-ORCS" id="6283">
    <property type="hits" value="13 hits in 1157 CRISPR screens"/>
</dbReference>
<dbReference type="EvolutionaryTrace" id="P80511"/>
<dbReference type="GeneWiki" id="S100A12"/>
<dbReference type="GenomeRNAi" id="6283"/>
<dbReference type="Pharos" id="P80511">
    <property type="development level" value="Tbio"/>
</dbReference>
<dbReference type="PRO" id="PR:P80511"/>
<dbReference type="Proteomes" id="UP000005640">
    <property type="component" value="Chromosome 1"/>
</dbReference>
<dbReference type="RNAct" id="P80511">
    <property type="molecule type" value="protein"/>
</dbReference>
<dbReference type="Bgee" id="ENSG00000163221">
    <property type="expression patterns" value="Expressed in trabecular bone tissue and 136 other cell types or tissues"/>
</dbReference>
<dbReference type="GO" id="GO:0005737">
    <property type="term" value="C:cytoplasm"/>
    <property type="evidence" value="ECO:0000314"/>
    <property type="project" value="UniProtKB"/>
</dbReference>
<dbReference type="GO" id="GO:0005856">
    <property type="term" value="C:cytoskeleton"/>
    <property type="evidence" value="ECO:0000304"/>
    <property type="project" value="UniProtKB"/>
</dbReference>
<dbReference type="GO" id="GO:0005829">
    <property type="term" value="C:cytosol"/>
    <property type="evidence" value="ECO:0000304"/>
    <property type="project" value="UniProtKB"/>
</dbReference>
<dbReference type="GO" id="GO:0005576">
    <property type="term" value="C:extracellular region"/>
    <property type="evidence" value="ECO:0000304"/>
    <property type="project" value="UniProtKB"/>
</dbReference>
<dbReference type="GO" id="GO:0005634">
    <property type="term" value="C:nucleus"/>
    <property type="evidence" value="ECO:0000314"/>
    <property type="project" value="UniProtKB"/>
</dbReference>
<dbReference type="GO" id="GO:0005886">
    <property type="term" value="C:plasma membrane"/>
    <property type="evidence" value="ECO:0000304"/>
    <property type="project" value="UniProtKB"/>
</dbReference>
<dbReference type="GO" id="GO:0034774">
    <property type="term" value="C:secretory granule lumen"/>
    <property type="evidence" value="ECO:0000304"/>
    <property type="project" value="Reactome"/>
</dbReference>
<dbReference type="GO" id="GO:0005509">
    <property type="term" value="F:calcium ion binding"/>
    <property type="evidence" value="ECO:0000318"/>
    <property type="project" value="GO_Central"/>
</dbReference>
<dbReference type="GO" id="GO:0048306">
    <property type="term" value="F:calcium-dependent protein binding"/>
    <property type="evidence" value="ECO:0000318"/>
    <property type="project" value="GO_Central"/>
</dbReference>
<dbReference type="GO" id="GO:0005507">
    <property type="term" value="F:copper ion binding"/>
    <property type="evidence" value="ECO:0000304"/>
    <property type="project" value="UniProtKB"/>
</dbReference>
<dbReference type="GO" id="GO:0042802">
    <property type="term" value="F:identical protein binding"/>
    <property type="evidence" value="ECO:0000353"/>
    <property type="project" value="IntAct"/>
</dbReference>
<dbReference type="GO" id="GO:0050786">
    <property type="term" value="F:RAGE receptor binding"/>
    <property type="evidence" value="ECO:0000314"/>
    <property type="project" value="UniProtKB"/>
</dbReference>
<dbReference type="GO" id="GO:0008270">
    <property type="term" value="F:zinc ion binding"/>
    <property type="evidence" value="ECO:0000304"/>
    <property type="project" value="UniProtKB"/>
</dbReference>
<dbReference type="GO" id="GO:0061844">
    <property type="term" value="P:antimicrobial humoral immune response mediated by antimicrobial peptide"/>
    <property type="evidence" value="ECO:0000314"/>
    <property type="project" value="UniProtKB"/>
</dbReference>
<dbReference type="GO" id="GO:0042742">
    <property type="term" value="P:defense response to bacterium"/>
    <property type="evidence" value="ECO:0000304"/>
    <property type="project" value="UniProtKB"/>
</dbReference>
<dbReference type="GO" id="GO:0050832">
    <property type="term" value="P:defense response to fungus"/>
    <property type="evidence" value="ECO:0000314"/>
    <property type="project" value="UniProtKB"/>
</dbReference>
<dbReference type="GO" id="GO:0043542">
    <property type="term" value="P:endothelial cell migration"/>
    <property type="evidence" value="ECO:0000318"/>
    <property type="project" value="GO_Central"/>
</dbReference>
<dbReference type="GO" id="GO:0006954">
    <property type="term" value="P:inflammatory response"/>
    <property type="evidence" value="ECO:0000304"/>
    <property type="project" value="ProtInc"/>
</dbReference>
<dbReference type="GO" id="GO:0045087">
    <property type="term" value="P:innate immune response"/>
    <property type="evidence" value="ECO:0000304"/>
    <property type="project" value="UniProtKB"/>
</dbReference>
<dbReference type="GO" id="GO:0031640">
    <property type="term" value="P:killing of cells of another organism"/>
    <property type="evidence" value="ECO:0000314"/>
    <property type="project" value="UniProtKB"/>
</dbReference>
<dbReference type="GO" id="GO:0045576">
    <property type="term" value="P:mast cell activation"/>
    <property type="evidence" value="ECO:0000304"/>
    <property type="project" value="UniProtKB"/>
</dbReference>
<dbReference type="GO" id="GO:0002548">
    <property type="term" value="P:monocyte chemotaxis"/>
    <property type="evidence" value="ECO:0000304"/>
    <property type="project" value="UniProtKB"/>
</dbReference>
<dbReference type="GO" id="GO:0030593">
    <property type="term" value="P:neutrophil chemotaxis"/>
    <property type="evidence" value="ECO:0000304"/>
    <property type="project" value="UniProtKB"/>
</dbReference>
<dbReference type="GO" id="GO:0043123">
    <property type="term" value="P:positive regulation of canonical NF-kappaB signal transduction"/>
    <property type="evidence" value="ECO:0000314"/>
    <property type="project" value="UniProtKB"/>
</dbReference>
<dbReference type="GO" id="GO:0050729">
    <property type="term" value="P:positive regulation of inflammatory response"/>
    <property type="evidence" value="ECO:0000304"/>
    <property type="project" value="UniProtKB"/>
</dbReference>
<dbReference type="GO" id="GO:0043406">
    <property type="term" value="P:positive regulation of MAP kinase activity"/>
    <property type="evidence" value="ECO:0000304"/>
    <property type="project" value="UniProtKB"/>
</dbReference>
<dbReference type="GO" id="GO:0051092">
    <property type="term" value="P:positive regulation of NF-kappaB transcription factor activity"/>
    <property type="evidence" value="ECO:0000304"/>
    <property type="project" value="UniProtKB"/>
</dbReference>
<dbReference type="GO" id="GO:0006805">
    <property type="term" value="P:xenobiotic metabolic process"/>
    <property type="evidence" value="ECO:0000314"/>
    <property type="project" value="UniProtKB"/>
</dbReference>
<dbReference type="CDD" id="cd05030">
    <property type="entry name" value="calgranulins"/>
    <property type="match status" value="1"/>
</dbReference>
<dbReference type="FunFam" id="1.10.238.10:FF:000044">
    <property type="entry name" value="Protein S100"/>
    <property type="match status" value="1"/>
</dbReference>
<dbReference type="Gene3D" id="1.10.238.10">
    <property type="entry name" value="EF-hand"/>
    <property type="match status" value="1"/>
</dbReference>
<dbReference type="InterPro" id="IPR011992">
    <property type="entry name" value="EF-hand-dom_pair"/>
</dbReference>
<dbReference type="InterPro" id="IPR002048">
    <property type="entry name" value="EF_hand_dom"/>
</dbReference>
<dbReference type="InterPro" id="IPR001751">
    <property type="entry name" value="S100/CaBP7/8-like_CS"/>
</dbReference>
<dbReference type="InterPro" id="IPR013787">
    <property type="entry name" value="S100_Ca-bd_sub"/>
</dbReference>
<dbReference type="PANTHER" id="PTHR11639:SF77">
    <property type="entry name" value="PROTEIN S100-A12"/>
    <property type="match status" value="1"/>
</dbReference>
<dbReference type="PANTHER" id="PTHR11639">
    <property type="entry name" value="S100 CALCIUM-BINDING PROTEIN"/>
    <property type="match status" value="1"/>
</dbReference>
<dbReference type="Pfam" id="PF01023">
    <property type="entry name" value="S_100"/>
    <property type="match status" value="1"/>
</dbReference>
<dbReference type="SMART" id="SM01394">
    <property type="entry name" value="S_100"/>
    <property type="match status" value="1"/>
</dbReference>
<dbReference type="SUPFAM" id="SSF47473">
    <property type="entry name" value="EF-hand"/>
    <property type="match status" value="1"/>
</dbReference>
<dbReference type="PROSITE" id="PS50222">
    <property type="entry name" value="EF_HAND_2"/>
    <property type="match status" value="1"/>
</dbReference>
<dbReference type="PROSITE" id="PS00303">
    <property type="entry name" value="S100_CABP"/>
    <property type="match status" value="1"/>
</dbReference>
<proteinExistence type="evidence at protein level"/>
<keyword id="KW-0002">3D-structure</keyword>
<keyword id="KW-0044">Antibiotic</keyword>
<keyword id="KW-0929">Antimicrobial</keyword>
<keyword id="KW-0106">Calcium</keyword>
<keyword id="KW-1003">Cell membrane</keyword>
<keyword id="KW-0186">Copper</keyword>
<keyword id="KW-0963">Cytoplasm</keyword>
<keyword id="KW-0206">Cytoskeleton</keyword>
<keyword id="KW-0903">Direct protein sequencing</keyword>
<keyword id="KW-0295">Fungicide</keyword>
<keyword id="KW-0391">Immunity</keyword>
<keyword id="KW-0395">Inflammatory response</keyword>
<keyword id="KW-0399">Innate immunity</keyword>
<keyword id="KW-0472">Membrane</keyword>
<keyword id="KW-0479">Metal-binding</keyword>
<keyword id="KW-1267">Proteomics identification</keyword>
<keyword id="KW-1185">Reference proteome</keyword>
<keyword id="KW-0677">Repeat</keyword>
<keyword id="KW-0964">Secreted</keyword>
<keyword id="KW-0862">Zinc</keyword>
<comment type="function">
    <text evidence="3 6 7 9">S100A12 is a calcium-, zinc- and copper-binding protein which plays a prominent role in the regulation of inflammatory processes and immune response. Its pro-inflammatory activity involves recruitment of leukocytes, promotion of cytokine and chemokine production, and regulation of leukocyte adhesion and migration. Acts as an alarmin or a danger associated molecular pattern (DAMP) molecule and stimulates innate immune cells via binding to receptor for advanced glycation endproducts (AGER). Binding to AGER activates the MAP-kinase and NF-kappa-B signaling pathways leading to production of pro-inflammatory cytokines and up-regulation of cell adhesion molecules ICAM1 and VCAM1. Acts as a monocyte and mast cell chemoattractant. Can stimulate mast cell degranulation and activation which generates chemokines, histamine and cytokines inducing further leukocyte recruitment to the sites of inflammation. Can inhibit the activity of matrix metalloproteinases; MMP2, MMP3 and MMP9 by chelating Zn(2+) from their active sites. Possesses filariacidal and filariastatic activity. Calcitermin possesses antifungal activity against C.albicans and is also active against E.coli and P.aeruginosa but not L.monocytogenes and S.aureus.</text>
</comment>
<comment type="subunit">
    <text evidence="4 9">Homodimer. Homooligomer (tetramer or hexamer) in the presence of calcium, zinc and copper ions. Interacts with AGER and both calcium and zinc are essential for the interaction. Interacts with CACYBP in a calcium-dependent manner.</text>
</comment>
<comment type="interaction">
    <interactant intactId="EBI-2823305">
        <id>P80511</id>
    </interactant>
    <interactant intactId="EBI-1646426">
        <id>Q15109</id>
        <label>AGER</label>
    </interactant>
    <organismsDiffer>false</organismsDiffer>
    <experiments>2</experiments>
</comment>
<comment type="interaction">
    <interactant intactId="EBI-2823305">
        <id>P80511</id>
    </interactant>
    <interactant intactId="EBI-2823305">
        <id>P80511</id>
        <label>S100A12</label>
    </interactant>
    <organismsDiffer>false</organismsDiffer>
    <experiments>6</experiments>
</comment>
<comment type="interaction">
    <interactant intactId="EBI-2823305">
        <id>P80511</id>
    </interactant>
    <interactant intactId="EBI-359977">
        <id>P01375</id>
        <label>TNF</label>
    </interactant>
    <organismsDiffer>false</organismsDiffer>
    <experiments>4</experiments>
</comment>
<comment type="subcellular location">
    <subcellularLocation>
        <location evidence="11">Secreted</location>
    </subcellularLocation>
    <subcellularLocation>
        <location evidence="11">Cytoplasm</location>
    </subcellularLocation>
    <subcellularLocation>
        <location evidence="11">Cytoplasm</location>
        <location evidence="11">Cytoskeleton</location>
    </subcellularLocation>
    <subcellularLocation>
        <location evidence="11">Cell membrane</location>
        <topology evidence="11">Peripheral membrane protein</topology>
    </subcellularLocation>
    <text>Predominantly localized in the cytoplasm. Upon elevation of the intracellular calcium level, translocated from the cytoplasm to the cytoskeleton and the cell membrane. Upon neutrophil activation is secreted via a microtubule-mediated, alternative pathway.</text>
</comment>
<comment type="tissue specificity">
    <text>Predominantly expressed by neutrophils, monocytes and activated macrophages. Expressed by eosinophils and macrophages in asthmatic airways in regions where mast cells accumulate. Found in high concentrations in the serum of patients suffering from various inflammatory disorders, such as rheumatoid arthritis, psoriatic arthritis, Crohn's disease, ulcerative colitis, and Kawasaki disease.</text>
</comment>
<comment type="domain">
    <text evidence="7">The hinge domain contributes significantly to its chemotactic properties.</text>
</comment>
<comment type="mass spectrometry">
    <molecule>Protein S100-A12</molecule>
</comment>
<comment type="mass spectrometry">
    <molecule>Calcitermin</molecule>
</comment>
<comment type="similarity">
    <text evidence="15">Belongs to the S-100 family.</text>
</comment>